<reference key="1">
    <citation type="journal article" date="2005" name="Genome Res.">
        <title>Comparative and functional genomic analyses of the pathogenicity of phytopathogen Xanthomonas campestris pv. campestris.</title>
        <authorList>
            <person name="Qian W."/>
            <person name="Jia Y."/>
            <person name="Ren S.-X."/>
            <person name="He Y.-Q."/>
            <person name="Feng J.-X."/>
            <person name="Lu L.-F."/>
            <person name="Sun Q."/>
            <person name="Ying G."/>
            <person name="Tang D.-J."/>
            <person name="Tang H."/>
            <person name="Wu W."/>
            <person name="Hao P."/>
            <person name="Wang L."/>
            <person name="Jiang B.-L."/>
            <person name="Zeng S."/>
            <person name="Gu W.-Y."/>
            <person name="Lu G."/>
            <person name="Rong L."/>
            <person name="Tian Y."/>
            <person name="Yao Z."/>
            <person name="Fu G."/>
            <person name="Chen B."/>
            <person name="Fang R."/>
            <person name="Qiang B."/>
            <person name="Chen Z."/>
            <person name="Zhao G.-P."/>
            <person name="Tang J.-L."/>
            <person name="He C."/>
        </authorList>
    </citation>
    <scope>NUCLEOTIDE SEQUENCE [LARGE SCALE GENOMIC DNA]</scope>
    <source>
        <strain>8004</strain>
    </source>
</reference>
<keyword id="KW-0997">Cell inner membrane</keyword>
<keyword id="KW-1003">Cell membrane</keyword>
<keyword id="KW-0201">Cytochrome c-type biogenesis</keyword>
<keyword id="KW-0349">Heme</keyword>
<keyword id="KW-0408">Iron</keyword>
<keyword id="KW-0472">Membrane</keyword>
<keyword id="KW-0479">Metal-binding</keyword>
<keyword id="KW-0735">Signal-anchor</keyword>
<keyword id="KW-0812">Transmembrane</keyword>
<keyword id="KW-1133">Transmembrane helix</keyword>
<dbReference type="EMBL" id="CP000050">
    <property type="protein sequence ID" value="AAY49621.1"/>
    <property type="molecule type" value="Genomic_DNA"/>
</dbReference>
<dbReference type="SMR" id="Q4UTK2"/>
<dbReference type="KEGG" id="xcb:XC_2571"/>
<dbReference type="HOGENOM" id="CLU_079503_1_1_6"/>
<dbReference type="Proteomes" id="UP000000420">
    <property type="component" value="Chromosome"/>
</dbReference>
<dbReference type="GO" id="GO:0005886">
    <property type="term" value="C:plasma membrane"/>
    <property type="evidence" value="ECO:0007669"/>
    <property type="project" value="UniProtKB-SubCell"/>
</dbReference>
<dbReference type="GO" id="GO:0020037">
    <property type="term" value="F:heme binding"/>
    <property type="evidence" value="ECO:0007669"/>
    <property type="project" value="InterPro"/>
</dbReference>
<dbReference type="GO" id="GO:0046872">
    <property type="term" value="F:metal ion binding"/>
    <property type="evidence" value="ECO:0007669"/>
    <property type="project" value="UniProtKB-KW"/>
</dbReference>
<dbReference type="GO" id="GO:0017004">
    <property type="term" value="P:cytochrome complex assembly"/>
    <property type="evidence" value="ECO:0007669"/>
    <property type="project" value="UniProtKB-KW"/>
</dbReference>
<dbReference type="Gene3D" id="2.40.50.140">
    <property type="entry name" value="Nucleic acid-binding proteins"/>
    <property type="match status" value="1"/>
</dbReference>
<dbReference type="HAMAP" id="MF_01959">
    <property type="entry name" value="CcmE"/>
    <property type="match status" value="1"/>
</dbReference>
<dbReference type="InterPro" id="IPR004329">
    <property type="entry name" value="CcmE"/>
</dbReference>
<dbReference type="InterPro" id="IPR036127">
    <property type="entry name" value="CcmE-like_sf"/>
</dbReference>
<dbReference type="InterPro" id="IPR012340">
    <property type="entry name" value="NA-bd_OB-fold"/>
</dbReference>
<dbReference type="NCBIfam" id="NF009637">
    <property type="entry name" value="PRK13159.1"/>
    <property type="match status" value="1"/>
</dbReference>
<dbReference type="NCBIfam" id="NF009727">
    <property type="entry name" value="PRK13254.1-1"/>
    <property type="match status" value="1"/>
</dbReference>
<dbReference type="NCBIfam" id="NF009729">
    <property type="entry name" value="PRK13254.1-3"/>
    <property type="match status" value="1"/>
</dbReference>
<dbReference type="NCBIfam" id="NF009731">
    <property type="entry name" value="PRK13254.1-5"/>
    <property type="match status" value="1"/>
</dbReference>
<dbReference type="PANTHER" id="PTHR34128">
    <property type="entry name" value="CYTOCHROME C-TYPE BIOGENESIS PROTEIN CCME HOMOLOG, MITOCHONDRIAL"/>
    <property type="match status" value="1"/>
</dbReference>
<dbReference type="PANTHER" id="PTHR34128:SF2">
    <property type="entry name" value="CYTOCHROME C-TYPE BIOGENESIS PROTEIN CCME HOMOLOG, MITOCHONDRIAL"/>
    <property type="match status" value="1"/>
</dbReference>
<dbReference type="Pfam" id="PF03100">
    <property type="entry name" value="CcmE"/>
    <property type="match status" value="1"/>
</dbReference>
<dbReference type="SUPFAM" id="SSF82093">
    <property type="entry name" value="Heme chaperone CcmE"/>
    <property type="match status" value="1"/>
</dbReference>
<accession>Q4UTK2</accession>
<comment type="function">
    <text evidence="1">Heme chaperone required for the biogenesis of c-type cytochromes. Transiently binds heme delivered by CcmC and transfers the heme to apo-cytochromes in a process facilitated by CcmF and CcmH.</text>
</comment>
<comment type="subcellular location">
    <subcellularLocation>
        <location evidence="1">Cell inner membrane</location>
        <topology evidence="1">Single-pass type II membrane protein</topology>
        <orientation evidence="1">Periplasmic side</orientation>
    </subcellularLocation>
</comment>
<comment type="similarity">
    <text evidence="1">Belongs to the CcmE/CycJ family.</text>
</comment>
<name>CCME1_XANC8</name>
<organism>
    <name type="scientific">Xanthomonas campestris pv. campestris (strain 8004)</name>
    <dbReference type="NCBI Taxonomy" id="314565"/>
    <lineage>
        <taxon>Bacteria</taxon>
        <taxon>Pseudomonadati</taxon>
        <taxon>Pseudomonadota</taxon>
        <taxon>Gammaproteobacteria</taxon>
        <taxon>Lysobacterales</taxon>
        <taxon>Lysobacteraceae</taxon>
        <taxon>Xanthomonas</taxon>
    </lineage>
</organism>
<feature type="chain" id="PRO_0000238883" description="Cytochrome c-type biogenesis protein CcmE 1">
    <location>
        <begin position="1"/>
        <end position="156"/>
    </location>
</feature>
<feature type="topological domain" description="Cytoplasmic" evidence="1">
    <location>
        <begin position="1"/>
        <end position="8"/>
    </location>
</feature>
<feature type="transmembrane region" description="Helical; Signal-anchor for type II membrane protein" evidence="1">
    <location>
        <begin position="9"/>
        <end position="29"/>
    </location>
</feature>
<feature type="topological domain" description="Periplasmic" evidence="1">
    <location>
        <begin position="30"/>
        <end position="156"/>
    </location>
</feature>
<feature type="binding site" description="covalent" evidence="1">
    <location>
        <position position="123"/>
    </location>
    <ligand>
        <name>heme</name>
        <dbReference type="ChEBI" id="CHEBI:30413"/>
    </ligand>
</feature>
<feature type="binding site" description="axial binding residue" evidence="1">
    <location>
        <position position="127"/>
    </location>
    <ligand>
        <name>heme</name>
        <dbReference type="ChEBI" id="CHEBI:30413"/>
    </ligand>
    <ligandPart>
        <name>Fe</name>
        <dbReference type="ChEBI" id="CHEBI:18248"/>
    </ligandPart>
</feature>
<sequence length="156" mass="16753">MNATRKQRLWLVIGVLTAAALAVTLIALALQRNMSYLFTPSQVDAGAAAGYQQFRLGGMVKAGSIQRATDSLTVTFKVIDKHAATQVEYTGILPDLFRDNQSVIANGRMQAGRFVANEVLAKHDETYMPKELKDAMAEGHVGKPIPAAAAPLSGVR</sequence>
<protein>
    <recommendedName>
        <fullName evidence="1">Cytochrome c-type biogenesis protein CcmE 1</fullName>
    </recommendedName>
    <alternativeName>
        <fullName evidence="1">Cytochrome c maturation protein E 1</fullName>
    </alternativeName>
    <alternativeName>
        <fullName evidence="1">Heme chaperone CcmE 1</fullName>
    </alternativeName>
</protein>
<proteinExistence type="inferred from homology"/>
<evidence type="ECO:0000255" key="1">
    <source>
        <dbReference type="HAMAP-Rule" id="MF_01959"/>
    </source>
</evidence>
<gene>
    <name evidence="1" type="primary">ccmE1</name>
    <name evidence="1" type="synonym">cycJ1</name>
    <name type="ordered locus">XC_2571</name>
</gene>